<comment type="function">
    <text evidence="1">Binds 16S rRNA, required for the assembly of 30S particles.</text>
</comment>
<comment type="subunit">
    <text evidence="1">Part of the 30S ribosomal subunit.</text>
</comment>
<comment type="subcellular location">
    <subcellularLocation>
        <location>Plastid</location>
        <location>Chloroplast</location>
    </subcellularLocation>
</comment>
<comment type="similarity">
    <text evidence="1">Belongs to the universal ribosomal protein uS14 family.</text>
</comment>
<feature type="chain" id="PRO_0000130968" description="Small ribosomal subunit protein uS14c">
    <location>
        <begin position="1"/>
        <end position="100"/>
    </location>
</feature>
<organism>
    <name type="scientific">Chlamydomonas reinhardtii</name>
    <name type="common">Chlamydomonas smithii</name>
    <dbReference type="NCBI Taxonomy" id="3055"/>
    <lineage>
        <taxon>Eukaryota</taxon>
        <taxon>Viridiplantae</taxon>
        <taxon>Chlorophyta</taxon>
        <taxon>core chlorophytes</taxon>
        <taxon>Chlorophyceae</taxon>
        <taxon>CS clade</taxon>
        <taxon>Chlamydomonadales</taxon>
        <taxon>Chlamydomonadaceae</taxon>
        <taxon>Chlamydomonas</taxon>
    </lineage>
</organism>
<geneLocation type="chloroplast"/>
<evidence type="ECO:0000255" key="1">
    <source>
        <dbReference type="HAMAP-Rule" id="MF_00537"/>
    </source>
</evidence>
<evidence type="ECO:0000305" key="2"/>
<keyword id="KW-0150">Chloroplast</keyword>
<keyword id="KW-0903">Direct protein sequencing</keyword>
<keyword id="KW-0934">Plastid</keyword>
<keyword id="KW-1185">Reference proteome</keyword>
<keyword id="KW-0687">Ribonucleoprotein</keyword>
<keyword id="KW-0689">Ribosomal protein</keyword>
<keyword id="KW-0694">RNA-binding</keyword>
<keyword id="KW-0699">rRNA-binding</keyword>
<name>RR14_CHLRE</name>
<accession>Q9GGE2</accession>
<accession>B7U1G7</accession>
<gene>
    <name evidence="1" type="primary">rps14</name>
</gene>
<sequence>MAKKSMIQRELKRQKLVMKYATKRAALKEQIKQTTFLKEKLSLHRKLQQLPRNSSAVRLHNRCMITGRPKGYFRDFGLSRHVLREMAHQGLLPGVCKSSW</sequence>
<reference key="1">
    <citation type="submission" date="2000-08" db="EMBL/GenBank/DDBJ databases">
        <title>The chloroplast rps7 gene in C. reinhardtii is not a split gene.</title>
        <authorList>
            <person name="Randolph-Anderson B.L."/>
            <person name="Boynton J.E."/>
            <person name="Gillham N.W."/>
        </authorList>
    </citation>
    <scope>NUCLEOTIDE SEQUENCE [GENOMIC DNA]</scope>
</reference>
<reference key="2">
    <citation type="journal article" date="2002" name="Plant Cell">
        <title>The Chlamydomonas reinhardtii plastid chromosome: islands of genes in a sea of repeats.</title>
        <authorList>
            <person name="Maul J.E."/>
            <person name="Lilly J.W."/>
            <person name="Cui L."/>
            <person name="dePamphilis C.W."/>
            <person name="Miller W."/>
            <person name="Harris E.H."/>
            <person name="Stern D.B."/>
        </authorList>
    </citation>
    <scope>NUCLEOTIDE SEQUENCE [LARGE SCALE GENOMIC DNA]</scope>
    <scope>IDENTIFICATION</scope>
    <scope>COMPLETE PLASTID GENOME</scope>
</reference>
<reference key="3">
    <citation type="journal article" date="2009" name="BMC Evol. Biol.">
        <title>Nucleotide diversity of the Chlamydomonas reinhardtii plastid genome: addressing the mutational-hazard hypothesis.</title>
        <authorList>
            <person name="Smith D.R."/>
            <person name="Lee R.W."/>
        </authorList>
    </citation>
    <scope>NUCLEOTIDE SEQUENCE [LARGE SCALE GENOMIC DNA]</scope>
    <source>
        <strain>CC-503</strain>
    </source>
</reference>
<reference key="4">
    <citation type="journal article" date="2002" name="Plant Cell">
        <title>Proteomic characterization of the small subunit of Chlamydomonas reinhardtii chloroplast ribosome: identification of a novel S1 domain-containing protein and unusually large orthologs of bacterial S2, S3, and S5.</title>
        <authorList>
            <person name="Yamaguchi K."/>
            <person name="Prieto S."/>
            <person name="Beligni M.V."/>
            <person name="Haynes P.A."/>
            <person name="McDonald W.H."/>
            <person name="Yates J.R. III"/>
            <person name="Mayfield S.P."/>
        </authorList>
    </citation>
    <scope>PROTEIN SEQUENCE OF 46-52 AND 85-97</scope>
    <source>
        <strain>Arg7/cw15</strain>
    </source>
</reference>
<protein>
    <recommendedName>
        <fullName evidence="1">Small ribosomal subunit protein uS14c</fullName>
    </recommendedName>
    <alternativeName>
        <fullName evidence="2">30S ribosomal protein S14, chloroplastic</fullName>
    </alternativeName>
</protein>
<proteinExistence type="evidence at protein level"/>
<dbReference type="EMBL" id="X53977">
    <property type="protein sequence ID" value="CAC08471.1"/>
    <property type="molecule type" value="Genomic_DNA"/>
</dbReference>
<dbReference type="EMBL" id="AF541865">
    <property type="protein sequence ID" value="AAN17819.1"/>
    <property type="molecule type" value="Genomic_DNA"/>
</dbReference>
<dbReference type="EMBL" id="FJ423446">
    <property type="protein sequence ID" value="ACJ50114.1"/>
    <property type="molecule type" value="Genomic_DNA"/>
</dbReference>
<dbReference type="EMBL" id="BK000554">
    <property type="protein sequence ID" value="DAA00926.1"/>
    <property type="molecule type" value="Genomic_DNA"/>
</dbReference>
<dbReference type="RefSeq" id="NP_958381.1">
    <property type="nucleotide sequence ID" value="NC_005353.1"/>
</dbReference>
<dbReference type="SMR" id="Q9GGE2"/>
<dbReference type="FunCoup" id="Q9GGE2">
    <property type="interactions" value="28"/>
</dbReference>
<dbReference type="STRING" id="3055.Q9GGE2"/>
<dbReference type="PaxDb" id="3055-DAA00926"/>
<dbReference type="GeneID" id="2716974"/>
<dbReference type="KEGG" id="cre:ChreCp025"/>
<dbReference type="eggNOG" id="KOG1741">
    <property type="taxonomic scope" value="Eukaryota"/>
</dbReference>
<dbReference type="HOGENOM" id="CLU_139869_0_1_1"/>
<dbReference type="InParanoid" id="Q9GGE2"/>
<dbReference type="Proteomes" id="UP000006906">
    <property type="component" value="Chloroplast"/>
</dbReference>
<dbReference type="GO" id="GO:0009507">
    <property type="term" value="C:chloroplast"/>
    <property type="evidence" value="ECO:0007669"/>
    <property type="project" value="UniProtKB-SubCell"/>
</dbReference>
<dbReference type="GO" id="GO:0015935">
    <property type="term" value="C:small ribosomal subunit"/>
    <property type="evidence" value="ECO:0000318"/>
    <property type="project" value="GO_Central"/>
</dbReference>
<dbReference type="GO" id="GO:0019843">
    <property type="term" value="F:rRNA binding"/>
    <property type="evidence" value="ECO:0007669"/>
    <property type="project" value="UniProtKB-UniRule"/>
</dbReference>
<dbReference type="GO" id="GO:0003735">
    <property type="term" value="F:structural constituent of ribosome"/>
    <property type="evidence" value="ECO:0000318"/>
    <property type="project" value="GO_Central"/>
</dbReference>
<dbReference type="GO" id="GO:0006412">
    <property type="term" value="P:translation"/>
    <property type="evidence" value="ECO:0000318"/>
    <property type="project" value="GO_Central"/>
</dbReference>
<dbReference type="FunFam" id="1.10.287.1480:FF:000001">
    <property type="entry name" value="30S ribosomal protein S14"/>
    <property type="match status" value="1"/>
</dbReference>
<dbReference type="Gene3D" id="1.10.287.1480">
    <property type="match status" value="1"/>
</dbReference>
<dbReference type="HAMAP" id="MF_00537">
    <property type="entry name" value="Ribosomal_uS14_1"/>
    <property type="match status" value="1"/>
</dbReference>
<dbReference type="InterPro" id="IPR001209">
    <property type="entry name" value="Ribosomal_uS14"/>
</dbReference>
<dbReference type="InterPro" id="IPR023036">
    <property type="entry name" value="Ribosomal_uS14_bac/plastid"/>
</dbReference>
<dbReference type="InterPro" id="IPR018271">
    <property type="entry name" value="Ribosomal_uS14_CS"/>
</dbReference>
<dbReference type="NCBIfam" id="NF006477">
    <property type="entry name" value="PRK08881.1"/>
    <property type="match status" value="1"/>
</dbReference>
<dbReference type="PANTHER" id="PTHR19836">
    <property type="entry name" value="30S RIBOSOMAL PROTEIN S14"/>
    <property type="match status" value="1"/>
</dbReference>
<dbReference type="PANTHER" id="PTHR19836:SF19">
    <property type="entry name" value="SMALL RIBOSOMAL SUBUNIT PROTEIN US14M"/>
    <property type="match status" value="1"/>
</dbReference>
<dbReference type="Pfam" id="PF00253">
    <property type="entry name" value="Ribosomal_S14"/>
    <property type="match status" value="1"/>
</dbReference>
<dbReference type="SUPFAM" id="SSF57716">
    <property type="entry name" value="Glucocorticoid receptor-like (DNA-binding domain)"/>
    <property type="match status" value="1"/>
</dbReference>
<dbReference type="PROSITE" id="PS00527">
    <property type="entry name" value="RIBOSOMAL_S14"/>
    <property type="match status" value="1"/>
</dbReference>